<gene>
    <name evidence="9" type="primary">NSHB5</name>
    <name evidence="9" type="synonym">GLB1E</name>
    <name evidence="9" type="synonym">HB5</name>
    <name evidence="8" type="synonym">Pgb1.5</name>
    <name evidence="10" type="ORF">OsI_20641</name>
</gene>
<evidence type="ECO:0000250" key="1">
    <source>
        <dbReference type="UniProtKB" id="A2XE98"/>
    </source>
</evidence>
<evidence type="ECO:0000250" key="2">
    <source>
        <dbReference type="UniProtKB" id="O04986"/>
    </source>
</evidence>
<evidence type="ECO:0000250" key="3">
    <source>
        <dbReference type="UniProtKB" id="P68168"/>
    </source>
</evidence>
<evidence type="ECO:0000250" key="4">
    <source>
        <dbReference type="UniProtKB" id="Q42831"/>
    </source>
</evidence>
<evidence type="ECO:0000255" key="5">
    <source>
        <dbReference type="PROSITE-ProRule" id="PRU00238"/>
    </source>
</evidence>
<evidence type="ECO:0000269" key="6">
    <source>
    </source>
</evidence>
<evidence type="ECO:0000303" key="7">
    <source>
    </source>
</evidence>
<evidence type="ECO:0000303" key="8">
    <source>
    </source>
</evidence>
<evidence type="ECO:0000305" key="9"/>
<evidence type="ECO:0000312" key="10">
    <source>
        <dbReference type="EMBL" id="EAY98709.1"/>
    </source>
</evidence>
<keyword id="KW-0963">Cytoplasm</keyword>
<keyword id="KW-0349">Heme</keyword>
<keyword id="KW-0408">Iron</keyword>
<keyword id="KW-0479">Metal-binding</keyword>
<keyword id="KW-0539">Nucleus</keyword>
<keyword id="KW-0560">Oxidoreductase</keyword>
<keyword id="KW-0561">Oxygen transport</keyword>
<keyword id="KW-1185">Reference proteome</keyword>
<keyword id="KW-0813">Transport</keyword>
<dbReference type="EC" id="1.7.2.-" evidence="2"/>
<dbReference type="EMBL" id="EF061459">
    <property type="protein sequence ID" value="ABN45744.1"/>
    <property type="molecule type" value="Genomic_DNA"/>
</dbReference>
<dbReference type="EMBL" id="CM000130">
    <property type="protein sequence ID" value="EAY98709.1"/>
    <property type="molecule type" value="Genomic_DNA"/>
</dbReference>
<dbReference type="SMR" id="A2Y6J9"/>
<dbReference type="STRING" id="39946.A2Y6J9"/>
<dbReference type="EnsemblPlants" id="BGIOSGA017720-TA">
    <property type="protein sequence ID" value="BGIOSGA017720-PA"/>
    <property type="gene ID" value="BGIOSGA017720"/>
</dbReference>
<dbReference type="Gramene" id="BGIOSGA017720-TA">
    <property type="protein sequence ID" value="BGIOSGA017720-PA"/>
    <property type="gene ID" value="BGIOSGA017720"/>
</dbReference>
<dbReference type="HOGENOM" id="CLU_003827_11_2_1"/>
<dbReference type="OMA" id="GAKQMFP"/>
<dbReference type="Proteomes" id="UP000007015">
    <property type="component" value="Chromosome 5"/>
</dbReference>
<dbReference type="GO" id="GO:0005737">
    <property type="term" value="C:cytoplasm"/>
    <property type="evidence" value="ECO:0000250"/>
    <property type="project" value="UniProtKB"/>
</dbReference>
<dbReference type="GO" id="GO:0005634">
    <property type="term" value="C:nucleus"/>
    <property type="evidence" value="ECO:0000250"/>
    <property type="project" value="UniProtKB"/>
</dbReference>
<dbReference type="GO" id="GO:0020037">
    <property type="term" value="F:heme binding"/>
    <property type="evidence" value="ECO:0007669"/>
    <property type="project" value="InterPro"/>
</dbReference>
<dbReference type="GO" id="GO:0046872">
    <property type="term" value="F:metal ion binding"/>
    <property type="evidence" value="ECO:0007669"/>
    <property type="project" value="UniProtKB-KW"/>
</dbReference>
<dbReference type="GO" id="GO:0016491">
    <property type="term" value="F:oxidoreductase activity"/>
    <property type="evidence" value="ECO:0007669"/>
    <property type="project" value="UniProtKB-KW"/>
</dbReference>
<dbReference type="GO" id="GO:0019825">
    <property type="term" value="F:oxygen binding"/>
    <property type="evidence" value="ECO:0007669"/>
    <property type="project" value="InterPro"/>
</dbReference>
<dbReference type="GO" id="GO:0005344">
    <property type="term" value="F:oxygen carrier activity"/>
    <property type="evidence" value="ECO:0007669"/>
    <property type="project" value="UniProtKB-KW"/>
</dbReference>
<dbReference type="Gene3D" id="1.10.490.10">
    <property type="entry name" value="Globins"/>
    <property type="match status" value="1"/>
</dbReference>
<dbReference type="InterPro" id="IPR000971">
    <property type="entry name" value="Globin"/>
</dbReference>
<dbReference type="InterPro" id="IPR009050">
    <property type="entry name" value="Globin-like_sf"/>
</dbReference>
<dbReference type="InterPro" id="IPR012292">
    <property type="entry name" value="Globin/Proto"/>
</dbReference>
<dbReference type="InterPro" id="IPR001032">
    <property type="entry name" value="Leghaemoglobin-like"/>
</dbReference>
<dbReference type="PANTHER" id="PTHR22924">
    <property type="entry name" value="LEGHEMOGLOBIN-RELATED"/>
    <property type="match status" value="1"/>
</dbReference>
<dbReference type="PANTHER" id="PTHR22924:SF95">
    <property type="entry name" value="OS05G0517600 PROTEIN"/>
    <property type="match status" value="1"/>
</dbReference>
<dbReference type="Pfam" id="PF00042">
    <property type="entry name" value="Globin"/>
    <property type="match status" value="1"/>
</dbReference>
<dbReference type="PRINTS" id="PR00188">
    <property type="entry name" value="PLANTGLOBIN"/>
</dbReference>
<dbReference type="SUPFAM" id="SSF46458">
    <property type="entry name" value="Globin-like"/>
    <property type="match status" value="1"/>
</dbReference>
<dbReference type="PROSITE" id="PS01033">
    <property type="entry name" value="GLOBIN"/>
    <property type="match status" value="1"/>
</dbReference>
<accession>A2Y6J9</accession>
<accession>A3EX90</accession>
<sequence>MGFSETQEELVLRSWQSMKKDSESIALKFFLRIFEIAPAAKQMFSFLRDSGDDVPLESHPKACESATQLRKTGDVKVREATLRRLGATHVKAGVADAHFEVVKTALLDTIKDAVPEMWSPEMKGAWEEAYDQLAAAIKEEMKKAA</sequence>
<protein>
    <recommendedName>
        <fullName evidence="9">Anaerobic nitrite reductase NSHB5</fullName>
        <ecNumber evidence="2">1.7.2.-</ecNumber>
    </recommendedName>
    <alternativeName>
        <fullName evidence="9">Non-symbiotic hemoglobin 5</fullName>
        <shortName evidence="9">OsNSHB5</shortName>
        <shortName evidence="9">rHb5</shortName>
    </alternativeName>
    <alternativeName>
        <fullName evidence="9">ORYsa GLB1e</fullName>
    </alternativeName>
    <alternativeName>
        <fullName evidence="8">Phytoglobin 1.5</fullName>
        <shortName evidence="8">OsPgb1.5</shortName>
        <shortName evidence="8">Phytogb1.5</shortName>
    </alternativeName>
    <alternativeName>
        <fullName evidence="7">Symbiotic-like hemoglobin 5</fullName>
    </alternativeName>
</protein>
<name>NSHB5_ORYSI</name>
<feature type="chain" id="PRO_0000459740" description="Anaerobic nitrite reductase NSHB5">
    <location>
        <begin position="1"/>
        <end position="145"/>
    </location>
</feature>
<feature type="domain" description="Globin" evidence="5">
    <location>
        <begin position="2"/>
        <end position="142"/>
    </location>
</feature>
<feature type="short sequence motif" description="Homodimerization" evidence="2">
    <location>
        <begin position="35"/>
        <end position="39"/>
    </location>
</feature>
<feature type="short sequence motif" description="Homodimerization" evidence="2">
    <location>
        <begin position="96"/>
        <end position="108"/>
    </location>
</feature>
<feature type="binding site" evidence="3">
    <location>
        <position position="45"/>
    </location>
    <ligand>
        <name>heme b</name>
        <dbReference type="ChEBI" id="CHEBI:60344"/>
    </ligand>
</feature>
<feature type="binding site" description="distal binding residue" evidence="5">
    <location>
        <position position="59"/>
    </location>
    <ligand>
        <name>heme b</name>
        <dbReference type="ChEBI" id="CHEBI:60344"/>
    </ligand>
    <ligandPart>
        <name>Fe</name>
        <dbReference type="ChEBI" id="CHEBI:18248"/>
    </ligandPart>
</feature>
<feature type="binding site" evidence="2">
    <location>
        <position position="61"/>
    </location>
    <ligand>
        <name>heme b</name>
        <dbReference type="ChEBI" id="CHEBI:60344"/>
    </ligand>
</feature>
<feature type="binding site" evidence="2">
    <location>
        <position position="84"/>
    </location>
    <ligand>
        <name>heme b</name>
        <dbReference type="ChEBI" id="CHEBI:60344"/>
    </ligand>
</feature>
<feature type="binding site" evidence="2">
    <location>
        <position position="88"/>
    </location>
    <ligand>
        <name>heme b</name>
        <dbReference type="ChEBI" id="CHEBI:60344"/>
    </ligand>
</feature>
<feature type="binding site" description="proximal binding residue" evidence="5">
    <location>
        <position position="89"/>
    </location>
    <ligand>
        <name>heme b</name>
        <dbReference type="ChEBI" id="CHEBI:60344"/>
    </ligand>
    <ligandPart>
        <name>Fe</name>
        <dbReference type="ChEBI" id="CHEBI:18248"/>
    </ligandPart>
</feature>
<feature type="site" description="Homodimerization" evidence="2">
    <location>
        <position position="123"/>
    </location>
</feature>
<feature type="sequence conflict" description="In Ref. 1; ABN45744." evidence="9" ref="1">
    <original>K</original>
    <variation>R</variation>
    <location>
        <position position="103"/>
    </location>
</feature>
<feature type="sequence conflict" description="In Ref. 1; ABN45744." evidence="9" ref="1">
    <original>K</original>
    <variation>R</variation>
    <location>
        <position position="123"/>
    </location>
</feature>
<proteinExistence type="evidence at transcript level"/>
<reference key="1">
    <citation type="journal article" date="2008" name="Plant Physiol. Biochem.">
        <title>Expression and in silico structural analysis of a rice (Oryza sativa) hemoglobin 5.</title>
        <authorList>
            <person name="Garrocho-Villegas V."/>
            <person name="Bustos-Rivera G."/>
            <person name="Gough J."/>
            <person name="Vinogradov S.N."/>
            <person name="Arredondo-Peter R."/>
        </authorList>
    </citation>
    <scope>NUCLEOTIDE SEQUENCE [GENOMIC DNA]</scope>
    <scope>TISSUE SPECIFICITY</scope>
    <source>
        <strain>cv. Morelos</strain>
    </source>
</reference>
<reference key="2">
    <citation type="journal article" date="2005" name="PLoS Biol.">
        <title>The genomes of Oryza sativa: a history of duplications.</title>
        <authorList>
            <person name="Yu J."/>
            <person name="Wang J."/>
            <person name="Lin W."/>
            <person name="Li S."/>
            <person name="Li H."/>
            <person name="Zhou J."/>
            <person name="Ni P."/>
            <person name="Dong W."/>
            <person name="Hu S."/>
            <person name="Zeng C."/>
            <person name="Zhang J."/>
            <person name="Zhang Y."/>
            <person name="Li R."/>
            <person name="Xu Z."/>
            <person name="Li S."/>
            <person name="Li X."/>
            <person name="Zheng H."/>
            <person name="Cong L."/>
            <person name="Lin L."/>
            <person name="Yin J."/>
            <person name="Geng J."/>
            <person name="Li G."/>
            <person name="Shi J."/>
            <person name="Liu J."/>
            <person name="Lv H."/>
            <person name="Li J."/>
            <person name="Wang J."/>
            <person name="Deng Y."/>
            <person name="Ran L."/>
            <person name="Shi X."/>
            <person name="Wang X."/>
            <person name="Wu Q."/>
            <person name="Li C."/>
            <person name="Ren X."/>
            <person name="Wang J."/>
            <person name="Wang X."/>
            <person name="Li D."/>
            <person name="Liu D."/>
            <person name="Zhang X."/>
            <person name="Ji Z."/>
            <person name="Zhao W."/>
            <person name="Sun Y."/>
            <person name="Zhang Z."/>
            <person name="Bao J."/>
            <person name="Han Y."/>
            <person name="Dong L."/>
            <person name="Ji J."/>
            <person name="Chen P."/>
            <person name="Wu S."/>
            <person name="Liu J."/>
            <person name="Xiao Y."/>
            <person name="Bu D."/>
            <person name="Tan J."/>
            <person name="Yang L."/>
            <person name="Ye C."/>
            <person name="Zhang J."/>
            <person name="Xu J."/>
            <person name="Zhou Y."/>
            <person name="Yu Y."/>
            <person name="Zhang B."/>
            <person name="Zhuang S."/>
            <person name="Wei H."/>
            <person name="Liu B."/>
            <person name="Lei M."/>
            <person name="Yu H."/>
            <person name="Li Y."/>
            <person name="Xu H."/>
            <person name="Wei S."/>
            <person name="He X."/>
            <person name="Fang L."/>
            <person name="Zhang Z."/>
            <person name="Zhang Y."/>
            <person name="Huang X."/>
            <person name="Su Z."/>
            <person name="Tong W."/>
            <person name="Li J."/>
            <person name="Tong Z."/>
            <person name="Li S."/>
            <person name="Ye J."/>
            <person name="Wang L."/>
            <person name="Fang L."/>
            <person name="Lei T."/>
            <person name="Chen C.-S."/>
            <person name="Chen H.-C."/>
            <person name="Xu Z."/>
            <person name="Li H."/>
            <person name="Huang H."/>
            <person name="Zhang F."/>
            <person name="Xu H."/>
            <person name="Li N."/>
            <person name="Zhao C."/>
            <person name="Li S."/>
            <person name="Dong L."/>
            <person name="Huang Y."/>
            <person name="Li L."/>
            <person name="Xi Y."/>
            <person name="Qi Q."/>
            <person name="Li W."/>
            <person name="Zhang B."/>
            <person name="Hu W."/>
            <person name="Zhang Y."/>
            <person name="Tian X."/>
            <person name="Jiao Y."/>
            <person name="Liang X."/>
            <person name="Jin J."/>
            <person name="Gao L."/>
            <person name="Zheng W."/>
            <person name="Hao B."/>
            <person name="Liu S.-M."/>
            <person name="Wang W."/>
            <person name="Yuan L."/>
            <person name="Cao M."/>
            <person name="McDermott J."/>
            <person name="Samudrala R."/>
            <person name="Wang J."/>
            <person name="Wong G.K.-S."/>
            <person name="Yang H."/>
        </authorList>
    </citation>
    <scope>NUCLEOTIDE SEQUENCE [LARGE SCALE GENOMIC DNA]</scope>
    <source>
        <strain>cv. 93-11</strain>
    </source>
</reference>
<reference key="3">
    <citation type="journal article" date="2018" name="Plant Cell Environ.">
        <title>Rice phytoglobins regulate responses under low mineral nutrients and abiotic stresses in Arabidopsis thaliana.</title>
        <authorList>
            <person name="Shankar A."/>
            <person name="Fernandes J.L."/>
            <person name="Kaur K."/>
            <person name="Sharma M."/>
            <person name="Kundu S."/>
            <person name="Pandey G.K."/>
        </authorList>
    </citation>
    <scope>GENE FAMILY</scope>
    <scope>NOMENCLATURE</scope>
    <source>
        <strain>cv. IR64</strain>
    </source>
</reference>
<organism>
    <name type="scientific">Oryza sativa subsp. indica</name>
    <name type="common">Rice</name>
    <dbReference type="NCBI Taxonomy" id="39946"/>
    <lineage>
        <taxon>Eukaryota</taxon>
        <taxon>Viridiplantae</taxon>
        <taxon>Streptophyta</taxon>
        <taxon>Embryophyta</taxon>
        <taxon>Tracheophyta</taxon>
        <taxon>Spermatophyta</taxon>
        <taxon>Magnoliopsida</taxon>
        <taxon>Liliopsida</taxon>
        <taxon>Poales</taxon>
        <taxon>Poaceae</taxon>
        <taxon>BOP clade</taxon>
        <taxon>Oryzoideae</taxon>
        <taxon>Oryzeae</taxon>
        <taxon>Oryzinae</taxon>
        <taxon>Oryza</taxon>
        <taxon>Oryza sativa</taxon>
    </lineage>
</organism>
<comment type="function">
    <text evidence="2 4">Phytoglobin that reduces nitrite to nitric oxide under anoxic conditions (e.g. during flooding or in waterlogged soil) (By similarity). May not function as an oxygen storage or transport protein (By similarity). Has an unusually high affinity for O(2) through an hexacoordinate heme iron because of a very low dissociation constant (By similarity).</text>
</comment>
<comment type="catalytic activity">
    <reaction evidence="2">
        <text>Fe(III)-heme b-[protein] + nitric oxide + H2O = Fe(II)-heme b-[protein] + nitrite + 2 H(+)</text>
        <dbReference type="Rhea" id="RHEA:77711"/>
        <dbReference type="Rhea" id="RHEA-COMP:18975"/>
        <dbReference type="Rhea" id="RHEA-COMP:18976"/>
        <dbReference type="ChEBI" id="CHEBI:15377"/>
        <dbReference type="ChEBI" id="CHEBI:15378"/>
        <dbReference type="ChEBI" id="CHEBI:16301"/>
        <dbReference type="ChEBI" id="CHEBI:16480"/>
        <dbReference type="ChEBI" id="CHEBI:55376"/>
        <dbReference type="ChEBI" id="CHEBI:60344"/>
    </reaction>
    <physiologicalReaction direction="right-to-left" evidence="2">
        <dbReference type="Rhea" id="RHEA:77713"/>
    </physiologicalReaction>
</comment>
<comment type="cofactor">
    <cofactor evidence="3">
        <name>heme b</name>
        <dbReference type="ChEBI" id="CHEBI:60344"/>
    </cofactor>
    <text evidence="3">Binds 1 heme group per subunit.</text>
</comment>
<comment type="subunit">
    <text evidence="2">Homodimer.</text>
</comment>
<comment type="subcellular location">
    <subcellularLocation>
        <location evidence="1">Cytoplasm</location>
    </subcellularLocation>
    <subcellularLocation>
        <location evidence="1">Nucleus</location>
    </subcellularLocation>
</comment>
<comment type="tissue specificity">
    <text evidence="6">Expressed in embryonic (embryos, coleoptiles and seminal roots) and vegetative (leaves and roots) organs.</text>
</comment>
<comment type="similarity">
    <text evidence="9">Belongs to the plant globin family.</text>
</comment>